<comment type="function">
    <text evidence="1">Modifies, by uridylylation and deuridylylation, the PII regulatory proteins (GlnB and homologs), in response to the nitrogen status of the cell that GlnD senses through the glutamine level. Under low glutamine levels, catalyzes the conversion of the PII proteins and UTP to PII-UMP and PPi, while under higher glutamine levels, GlnD hydrolyzes PII-UMP to PII and UMP (deuridylylation). Thus, controls uridylylation state and activity of the PII proteins, and plays an important role in the regulation of nitrogen assimilation and metabolism.</text>
</comment>
<comment type="catalytic activity">
    <reaction evidence="1">
        <text>[protein-PII]-L-tyrosine + UTP = [protein-PII]-uridylyl-L-tyrosine + diphosphate</text>
        <dbReference type="Rhea" id="RHEA:13673"/>
        <dbReference type="Rhea" id="RHEA-COMP:12147"/>
        <dbReference type="Rhea" id="RHEA-COMP:12148"/>
        <dbReference type="ChEBI" id="CHEBI:33019"/>
        <dbReference type="ChEBI" id="CHEBI:46398"/>
        <dbReference type="ChEBI" id="CHEBI:46858"/>
        <dbReference type="ChEBI" id="CHEBI:90602"/>
        <dbReference type="EC" id="2.7.7.59"/>
    </reaction>
</comment>
<comment type="catalytic activity">
    <reaction evidence="1">
        <text>[protein-PII]-uridylyl-L-tyrosine + H2O = [protein-PII]-L-tyrosine + UMP + H(+)</text>
        <dbReference type="Rhea" id="RHEA:48600"/>
        <dbReference type="Rhea" id="RHEA-COMP:12147"/>
        <dbReference type="Rhea" id="RHEA-COMP:12148"/>
        <dbReference type="ChEBI" id="CHEBI:15377"/>
        <dbReference type="ChEBI" id="CHEBI:15378"/>
        <dbReference type="ChEBI" id="CHEBI:46858"/>
        <dbReference type="ChEBI" id="CHEBI:57865"/>
        <dbReference type="ChEBI" id="CHEBI:90602"/>
    </reaction>
</comment>
<comment type="cofactor">
    <cofactor evidence="1">
        <name>Mg(2+)</name>
        <dbReference type="ChEBI" id="CHEBI:18420"/>
    </cofactor>
</comment>
<comment type="activity regulation">
    <text evidence="1">Uridylyltransferase (UTase) activity is inhibited by glutamine, while glutamine activates uridylyl-removing (UR) activity.</text>
</comment>
<comment type="domain">
    <text evidence="1">Has four distinct domains: an N-terminal nucleotidyltransferase (NT) domain responsible for UTase activity, a central HD domain that encodes UR activity, and two C-terminal ACT domains that seem to have a role in glutamine sensing.</text>
</comment>
<comment type="similarity">
    <text evidence="1">Belongs to the GlnD family.</text>
</comment>
<keyword id="KW-0378">Hydrolase</keyword>
<keyword id="KW-0460">Magnesium</keyword>
<keyword id="KW-0511">Multifunctional enzyme</keyword>
<keyword id="KW-0548">Nucleotidyltransferase</keyword>
<keyword id="KW-0677">Repeat</keyword>
<keyword id="KW-0808">Transferase</keyword>
<feature type="chain" id="PRO_1000022355" description="Bifunctional uridylyltransferase/uridylyl-removing enzyme">
    <location>
        <begin position="1"/>
        <end position="874"/>
    </location>
</feature>
<feature type="domain" description="HD" evidence="2">
    <location>
        <begin position="451"/>
        <end position="573"/>
    </location>
</feature>
<feature type="domain" description="ACT 1" evidence="1">
    <location>
        <begin position="693"/>
        <end position="777"/>
    </location>
</feature>
<feature type="domain" description="ACT 2" evidence="1">
    <location>
        <begin position="800"/>
        <end position="874"/>
    </location>
</feature>
<feature type="region of interest" description="Uridylyltransferase">
    <location>
        <begin position="1"/>
        <end position="332"/>
    </location>
</feature>
<feature type="region of interest" description="Uridylyl-removing">
    <location>
        <begin position="333"/>
        <end position="692"/>
    </location>
</feature>
<reference key="1">
    <citation type="submission" date="2007-08" db="EMBL/GenBank/DDBJ databases">
        <authorList>
            <consortium name="The Vibrio harveyi Genome Sequencing Project"/>
            <person name="Bassler B."/>
            <person name="Clifton S.W."/>
            <person name="Fulton L."/>
            <person name="Delehaunty K."/>
            <person name="Fronick C."/>
            <person name="Harrison M."/>
            <person name="Markivic C."/>
            <person name="Fulton R."/>
            <person name="Tin-Wollam A.-M."/>
            <person name="Shah N."/>
            <person name="Pepin K."/>
            <person name="Nash W."/>
            <person name="Thiruvilangam P."/>
            <person name="Bhonagiri V."/>
            <person name="Waters C."/>
            <person name="Tu K.C."/>
            <person name="Irgon J."/>
            <person name="Wilson R.K."/>
        </authorList>
    </citation>
    <scope>NUCLEOTIDE SEQUENCE [LARGE SCALE GENOMIC DNA]</scope>
    <source>
        <strain>ATCC BAA-1116 / BB120</strain>
    </source>
</reference>
<gene>
    <name evidence="1" type="primary">glnD</name>
    <name type="ordered locus">VIBHAR_03239</name>
</gene>
<dbReference type="EC" id="2.7.7.59" evidence="1"/>
<dbReference type="EC" id="3.1.4.-" evidence="1"/>
<dbReference type="EMBL" id="CP000789">
    <property type="protein sequence ID" value="ABU72188.1"/>
    <property type="molecule type" value="Genomic_DNA"/>
</dbReference>
<dbReference type="RefSeq" id="WP_012128699.1">
    <property type="nucleotide sequence ID" value="NC_009783.1"/>
</dbReference>
<dbReference type="SMR" id="A7N1X9"/>
<dbReference type="KEGG" id="vha:VIBHAR_03239"/>
<dbReference type="PATRIC" id="fig|338187.25.peg.2951"/>
<dbReference type="Proteomes" id="UP000008152">
    <property type="component" value="Chromosome I"/>
</dbReference>
<dbReference type="GO" id="GO:0008773">
    <property type="term" value="F:[protein-PII] uridylyltransferase activity"/>
    <property type="evidence" value="ECO:0007669"/>
    <property type="project" value="UniProtKB-UniRule"/>
</dbReference>
<dbReference type="GO" id="GO:0008081">
    <property type="term" value="F:phosphoric diester hydrolase activity"/>
    <property type="evidence" value="ECO:0007669"/>
    <property type="project" value="UniProtKB-UniRule"/>
</dbReference>
<dbReference type="GO" id="GO:0006808">
    <property type="term" value="P:regulation of nitrogen utilization"/>
    <property type="evidence" value="ECO:0007669"/>
    <property type="project" value="UniProtKB-UniRule"/>
</dbReference>
<dbReference type="CDD" id="cd04899">
    <property type="entry name" value="ACT_ACR-UUR-like_2"/>
    <property type="match status" value="1"/>
</dbReference>
<dbReference type="CDD" id="cd04900">
    <property type="entry name" value="ACT_UUR-like_1"/>
    <property type="match status" value="1"/>
</dbReference>
<dbReference type="CDD" id="cd00077">
    <property type="entry name" value="HDc"/>
    <property type="match status" value="1"/>
</dbReference>
<dbReference type="CDD" id="cd05401">
    <property type="entry name" value="NT_GlnE_GlnD_like"/>
    <property type="match status" value="1"/>
</dbReference>
<dbReference type="Gene3D" id="3.30.70.260">
    <property type="match status" value="1"/>
</dbReference>
<dbReference type="Gene3D" id="3.30.460.10">
    <property type="entry name" value="Beta Polymerase, domain 2"/>
    <property type="match status" value="1"/>
</dbReference>
<dbReference type="Gene3D" id="1.10.3090.10">
    <property type="entry name" value="cca-adding enzyme, domain 2"/>
    <property type="match status" value="1"/>
</dbReference>
<dbReference type="HAMAP" id="MF_00277">
    <property type="entry name" value="PII_uridylyl_transf"/>
    <property type="match status" value="1"/>
</dbReference>
<dbReference type="InterPro" id="IPR045865">
    <property type="entry name" value="ACT-like_dom_sf"/>
</dbReference>
<dbReference type="InterPro" id="IPR002912">
    <property type="entry name" value="ACT_dom"/>
</dbReference>
<dbReference type="InterPro" id="IPR003607">
    <property type="entry name" value="HD/PDEase_dom"/>
</dbReference>
<dbReference type="InterPro" id="IPR006674">
    <property type="entry name" value="HD_domain"/>
</dbReference>
<dbReference type="InterPro" id="IPR043519">
    <property type="entry name" value="NT_sf"/>
</dbReference>
<dbReference type="InterPro" id="IPR013546">
    <property type="entry name" value="PII_UdlTrfase/GS_AdlTrfase"/>
</dbReference>
<dbReference type="InterPro" id="IPR002934">
    <property type="entry name" value="Polymerase_NTP_transf_dom"/>
</dbReference>
<dbReference type="InterPro" id="IPR010043">
    <property type="entry name" value="UTase/UR"/>
</dbReference>
<dbReference type="NCBIfam" id="NF002487">
    <property type="entry name" value="PRK01759.1"/>
    <property type="match status" value="1"/>
</dbReference>
<dbReference type="NCBIfam" id="NF003448">
    <property type="entry name" value="PRK05007.1"/>
    <property type="match status" value="1"/>
</dbReference>
<dbReference type="NCBIfam" id="TIGR01693">
    <property type="entry name" value="UTase_glnD"/>
    <property type="match status" value="1"/>
</dbReference>
<dbReference type="PANTHER" id="PTHR47320">
    <property type="entry name" value="BIFUNCTIONAL URIDYLYLTRANSFERASE/URIDYLYL-REMOVING ENZYME"/>
    <property type="match status" value="1"/>
</dbReference>
<dbReference type="PANTHER" id="PTHR47320:SF1">
    <property type="entry name" value="BIFUNCTIONAL URIDYLYLTRANSFERASE_URIDYLYL-REMOVING ENZYME"/>
    <property type="match status" value="1"/>
</dbReference>
<dbReference type="Pfam" id="PF01842">
    <property type="entry name" value="ACT"/>
    <property type="match status" value="1"/>
</dbReference>
<dbReference type="Pfam" id="PF08335">
    <property type="entry name" value="GlnD_UR_UTase"/>
    <property type="match status" value="1"/>
</dbReference>
<dbReference type="Pfam" id="PF01966">
    <property type="entry name" value="HD"/>
    <property type="match status" value="1"/>
</dbReference>
<dbReference type="Pfam" id="PF01909">
    <property type="entry name" value="NTP_transf_2"/>
    <property type="match status" value="1"/>
</dbReference>
<dbReference type="PIRSF" id="PIRSF006288">
    <property type="entry name" value="PII_uridyltransf"/>
    <property type="match status" value="1"/>
</dbReference>
<dbReference type="SMART" id="SM00471">
    <property type="entry name" value="HDc"/>
    <property type="match status" value="1"/>
</dbReference>
<dbReference type="SUPFAM" id="SSF55021">
    <property type="entry name" value="ACT-like"/>
    <property type="match status" value="2"/>
</dbReference>
<dbReference type="SUPFAM" id="SSF109604">
    <property type="entry name" value="HD-domain/PDEase-like"/>
    <property type="match status" value="1"/>
</dbReference>
<dbReference type="SUPFAM" id="SSF81301">
    <property type="entry name" value="Nucleotidyltransferase"/>
    <property type="match status" value="1"/>
</dbReference>
<dbReference type="SUPFAM" id="SSF81593">
    <property type="entry name" value="Nucleotidyltransferase substrate binding subunit/domain"/>
    <property type="match status" value="1"/>
</dbReference>
<dbReference type="PROSITE" id="PS51671">
    <property type="entry name" value="ACT"/>
    <property type="match status" value="2"/>
</dbReference>
<dbReference type="PROSITE" id="PS51831">
    <property type="entry name" value="HD"/>
    <property type="match status" value="1"/>
</dbReference>
<organism>
    <name type="scientific">Vibrio campbellii (strain ATCC BAA-1116)</name>
    <dbReference type="NCBI Taxonomy" id="2902295"/>
    <lineage>
        <taxon>Bacteria</taxon>
        <taxon>Pseudomonadati</taxon>
        <taxon>Pseudomonadota</taxon>
        <taxon>Gammaproteobacteria</taxon>
        <taxon>Vibrionales</taxon>
        <taxon>Vibrionaceae</taxon>
        <taxon>Vibrio</taxon>
    </lineage>
</organism>
<accession>A7N1X9</accession>
<name>GLND_VIBC1</name>
<proteinExistence type="inferred from homology"/>
<evidence type="ECO:0000255" key="1">
    <source>
        <dbReference type="HAMAP-Rule" id="MF_00277"/>
    </source>
</evidence>
<evidence type="ECO:0000255" key="2">
    <source>
        <dbReference type="PROSITE-ProRule" id="PRU01175"/>
    </source>
</evidence>
<protein>
    <recommendedName>
        <fullName evidence="1">Bifunctional uridylyltransferase/uridylyl-removing enzyme</fullName>
        <shortName evidence="1">UTase/UR</shortName>
    </recommendedName>
    <alternativeName>
        <fullName evidence="1">Bifunctional [protein-PII] modification enzyme</fullName>
    </alternativeName>
    <alternativeName>
        <fullName evidence="1">Bifunctional nitrogen sensor protein</fullName>
    </alternativeName>
    <domain>
        <recommendedName>
            <fullName evidence="1">[Protein-PII] uridylyltransferase</fullName>
            <shortName evidence="1">PII uridylyltransferase</shortName>
            <shortName evidence="1">UTase</shortName>
            <ecNumber evidence="1">2.7.7.59</ecNumber>
        </recommendedName>
    </domain>
    <domain>
        <recommendedName>
            <fullName evidence="1">[Protein-PII]-UMP uridylyl-removing enzyme</fullName>
            <shortName evidence="1">UR</shortName>
            <ecNumber evidence="1">3.1.4.-</ecNumber>
        </recommendedName>
    </domain>
</protein>
<sequence length="874" mass="100710">MTLQSPLTFRDEQINIGELKQELEKFSSYQKEEFLQHHPVTNLVLSRAEYMDLLLNRLWQHFGFKDIHNISLVAVGGYGRGELHPLSDIDILILSNNKLPNALEAKISEFITLLWDLRLEVGHAVRTVDECAEIGRADLTVATNLQEARLLCGSEDTFQALKKVVLSDSFWPSETFYRAKIQEQRERHARYHDTTYNLEPDIKSTPGGLRDIHTLSWVARRHFGATSLLEMSRYGFLTDAEYRELVECQDILWRVRFALHIELRRYDNRLTFAHQAQVAEHLGYVGEGNRGVEMMMKEFYRTLRRVAELNKMLLKLFDQAIINGGASEDAEIIDEDFQRRGALIEARKPALFQARPETILDMFLHIANDSSIEGVSPPTLRQLRTARRRLNKFLHTIPEAREKFMALCRHPNALHKAFSLMHKLGVLAAYLPQWSQIVGQMQFDLFHVYTVDEHSIRLLKHINTFSYAENHSKHPICCEVYPRIQKKELLILAAIFHDIGKGRGGDHSVIGEGEAYDFCIEHGLSKPEAKLVSWLVRHHLLMSVTAQRRDIYDPDVITEFAKQVRDEEYLEYLVCLTVADICATNPELWNSWKRTLLAELFYSTQRALRRGLENPVDVRERIRHNQQMASAQLRKEGFSAREIEVLWQRFKADYFLRHTHKQIAWHCENLLRMEDTSKPLVLISKKATRGGTEVFVYSPDQPALFATVVAELDRRNFNVHDAQIMTSKDGYVLDTFMVLDQHGKAIEEGRHSAVTKHITHVLEDGRPTKIKTRRTPNKLQHFNVKTKVDFLPTKSKKRTLMEFVALDTPGLLAKVGRTFADLGINLHAAKITTIGERAEDLFILTSEAGGRLSEEQQTELREKLIEKLSDSVSA</sequence>